<accession>A8GLS2</accession>
<sequence length="346" mass="37176">MVSSNFYKNLGPRKLMAIIDFLHDIIEPPKVHEDIVIHDIKILQEASSNDISFLSNHKYSEFLKTTKAAACIVPKNFTGEANPNTVLIRAENSYFAYGKLIDFFYAPIKSYHAKIMKSAIVADSATIGKNCYIGHNVVIEDDVIIGDDSIIESGSFIGRGVNIGKNARIEQHVSINYAIIGDDALILAGAKIGQEGFGFSTEKGVHHKIFHIGVVKIGNNVEIGSNTTIDRGSLQDTIIEDLCRIDNLVQIGHGVKIGKGSIIVAQAGIAGSSTIGKYCALGGQVGIAGHLNICDGVQVAAQGGVLQNIEACKIVGGSPAVPIMDWHRQSVIMKQLVKTSNSKLKK</sequence>
<proteinExistence type="inferred from homology"/>
<reference key="1">
    <citation type="submission" date="2007-09" db="EMBL/GenBank/DDBJ databases">
        <title>Complete genome sequence of Rickettsia akari.</title>
        <authorList>
            <person name="Madan A."/>
            <person name="Fahey J."/>
            <person name="Helton E."/>
            <person name="Ketteman M."/>
            <person name="Madan A."/>
            <person name="Rodrigues S."/>
            <person name="Sanchez A."/>
            <person name="Whiting M."/>
            <person name="Dasch G."/>
            <person name="Eremeeva M."/>
        </authorList>
    </citation>
    <scope>NUCLEOTIDE SEQUENCE [LARGE SCALE GENOMIC DNA]</scope>
    <source>
        <strain>Hartford</strain>
    </source>
</reference>
<keyword id="KW-0012">Acyltransferase</keyword>
<keyword id="KW-0441">Lipid A biosynthesis</keyword>
<keyword id="KW-0444">Lipid biosynthesis</keyword>
<keyword id="KW-0443">Lipid metabolism</keyword>
<keyword id="KW-0677">Repeat</keyword>
<keyword id="KW-0808">Transferase</keyword>
<evidence type="ECO:0000255" key="1">
    <source>
        <dbReference type="HAMAP-Rule" id="MF_00523"/>
    </source>
</evidence>
<comment type="function">
    <text evidence="1">Catalyzes the N-acylation of UDP-3-O-acylglucosamine using 3-hydroxyacyl-ACP as the acyl donor. Is involved in the biosynthesis of lipid A, a phosphorylated glycolipid that anchors the lipopolysaccharide to the outer membrane of the cell.</text>
</comment>
<comment type="catalytic activity">
    <reaction evidence="1">
        <text>a UDP-3-O-[(3R)-3-hydroxyacyl]-alpha-D-glucosamine + a (3R)-hydroxyacyl-[ACP] = a UDP-2-N,3-O-bis[(3R)-3-hydroxyacyl]-alpha-D-glucosamine + holo-[ACP] + H(+)</text>
        <dbReference type="Rhea" id="RHEA:53836"/>
        <dbReference type="Rhea" id="RHEA-COMP:9685"/>
        <dbReference type="Rhea" id="RHEA-COMP:9945"/>
        <dbReference type="ChEBI" id="CHEBI:15378"/>
        <dbReference type="ChEBI" id="CHEBI:64479"/>
        <dbReference type="ChEBI" id="CHEBI:78827"/>
        <dbReference type="ChEBI" id="CHEBI:137740"/>
        <dbReference type="ChEBI" id="CHEBI:137748"/>
        <dbReference type="EC" id="2.3.1.191"/>
    </reaction>
</comment>
<comment type="pathway">
    <text evidence="1">Bacterial outer membrane biogenesis; LPS lipid A biosynthesis.</text>
</comment>
<comment type="subunit">
    <text evidence="1">Homotrimer.</text>
</comment>
<comment type="similarity">
    <text evidence="1">Belongs to the transferase hexapeptide repeat family. LpxD subfamily.</text>
</comment>
<name>LPXD_RICAH</name>
<dbReference type="EC" id="2.3.1.191" evidence="1"/>
<dbReference type="EMBL" id="CP000847">
    <property type="protein sequence ID" value="ABV74347.1"/>
    <property type="molecule type" value="Genomic_DNA"/>
</dbReference>
<dbReference type="RefSeq" id="WP_012013217.1">
    <property type="nucleotide sequence ID" value="NC_009881.1"/>
</dbReference>
<dbReference type="SMR" id="A8GLS2"/>
<dbReference type="STRING" id="293614.A1C_00050"/>
<dbReference type="KEGG" id="rak:A1C_00050"/>
<dbReference type="eggNOG" id="COG1044">
    <property type="taxonomic scope" value="Bacteria"/>
</dbReference>
<dbReference type="HOGENOM" id="CLU_049865_0_0_5"/>
<dbReference type="UniPathway" id="UPA00973"/>
<dbReference type="Proteomes" id="UP000006830">
    <property type="component" value="Chromosome"/>
</dbReference>
<dbReference type="GO" id="GO:0016020">
    <property type="term" value="C:membrane"/>
    <property type="evidence" value="ECO:0007669"/>
    <property type="project" value="GOC"/>
</dbReference>
<dbReference type="GO" id="GO:0016410">
    <property type="term" value="F:N-acyltransferase activity"/>
    <property type="evidence" value="ECO:0007669"/>
    <property type="project" value="InterPro"/>
</dbReference>
<dbReference type="GO" id="GO:0009245">
    <property type="term" value="P:lipid A biosynthetic process"/>
    <property type="evidence" value="ECO:0007669"/>
    <property type="project" value="UniProtKB-UniRule"/>
</dbReference>
<dbReference type="CDD" id="cd03352">
    <property type="entry name" value="LbH_LpxD"/>
    <property type="match status" value="1"/>
</dbReference>
<dbReference type="Gene3D" id="2.160.10.10">
    <property type="entry name" value="Hexapeptide repeat proteins"/>
    <property type="match status" value="1"/>
</dbReference>
<dbReference type="Gene3D" id="3.40.1390.10">
    <property type="entry name" value="MurE/MurF, N-terminal domain"/>
    <property type="match status" value="1"/>
</dbReference>
<dbReference type="HAMAP" id="MF_00523">
    <property type="entry name" value="LpxD"/>
    <property type="match status" value="1"/>
</dbReference>
<dbReference type="InterPro" id="IPR001451">
    <property type="entry name" value="Hexapep"/>
</dbReference>
<dbReference type="InterPro" id="IPR018357">
    <property type="entry name" value="Hexapep_transf_CS"/>
</dbReference>
<dbReference type="InterPro" id="IPR007691">
    <property type="entry name" value="LpxD"/>
</dbReference>
<dbReference type="InterPro" id="IPR011004">
    <property type="entry name" value="Trimer_LpxA-like_sf"/>
</dbReference>
<dbReference type="InterPro" id="IPR020573">
    <property type="entry name" value="UDP_GlcNAc_AcTrfase_non-rep"/>
</dbReference>
<dbReference type="NCBIfam" id="TIGR01853">
    <property type="entry name" value="lipid_A_lpxD"/>
    <property type="match status" value="1"/>
</dbReference>
<dbReference type="NCBIfam" id="NF002060">
    <property type="entry name" value="PRK00892.1"/>
    <property type="match status" value="1"/>
</dbReference>
<dbReference type="PANTHER" id="PTHR43378">
    <property type="entry name" value="UDP-3-O-ACYLGLUCOSAMINE N-ACYLTRANSFERASE"/>
    <property type="match status" value="1"/>
</dbReference>
<dbReference type="PANTHER" id="PTHR43378:SF2">
    <property type="entry name" value="UDP-3-O-ACYLGLUCOSAMINE N-ACYLTRANSFERASE 1, MITOCHONDRIAL-RELATED"/>
    <property type="match status" value="1"/>
</dbReference>
<dbReference type="Pfam" id="PF00132">
    <property type="entry name" value="Hexapep"/>
    <property type="match status" value="2"/>
</dbReference>
<dbReference type="Pfam" id="PF04613">
    <property type="entry name" value="LpxD"/>
    <property type="match status" value="1"/>
</dbReference>
<dbReference type="SUPFAM" id="SSF51161">
    <property type="entry name" value="Trimeric LpxA-like enzymes"/>
    <property type="match status" value="1"/>
</dbReference>
<dbReference type="PROSITE" id="PS00101">
    <property type="entry name" value="HEXAPEP_TRANSFERASES"/>
    <property type="match status" value="2"/>
</dbReference>
<organism>
    <name type="scientific">Rickettsia akari (strain Hartford)</name>
    <dbReference type="NCBI Taxonomy" id="293614"/>
    <lineage>
        <taxon>Bacteria</taxon>
        <taxon>Pseudomonadati</taxon>
        <taxon>Pseudomonadota</taxon>
        <taxon>Alphaproteobacteria</taxon>
        <taxon>Rickettsiales</taxon>
        <taxon>Rickettsiaceae</taxon>
        <taxon>Rickettsieae</taxon>
        <taxon>Rickettsia</taxon>
        <taxon>spotted fever group</taxon>
    </lineage>
</organism>
<feature type="chain" id="PRO_1000050957" description="UDP-3-O-acylglucosamine N-acyltransferase">
    <location>
        <begin position="1"/>
        <end position="346"/>
    </location>
</feature>
<feature type="active site" description="Proton acceptor" evidence="1">
    <location>
        <position position="253"/>
    </location>
</feature>
<protein>
    <recommendedName>
        <fullName evidence="1">UDP-3-O-acylglucosamine N-acyltransferase</fullName>
        <ecNumber evidence="1">2.3.1.191</ecNumber>
    </recommendedName>
</protein>
<gene>
    <name evidence="1" type="primary">lpxD</name>
    <name type="ordered locus">A1C_00050</name>
</gene>